<evidence type="ECO:0000255" key="1">
    <source>
        <dbReference type="HAMAP-Rule" id="MF_01362"/>
    </source>
</evidence>
<sequence>MRIAKIGVIALFLFMALGGIGGVMLAGYTFILRAG</sequence>
<keyword id="KW-0997">Cell inner membrane</keyword>
<keyword id="KW-1003">Cell membrane</keyword>
<keyword id="KW-0472">Membrane</keyword>
<keyword id="KW-0812">Transmembrane</keyword>
<keyword id="KW-1133">Transmembrane helix</keyword>
<organism>
    <name type="scientific">Escherichia coli (strain UTI89 / UPEC)</name>
    <dbReference type="NCBI Taxonomy" id="364106"/>
    <lineage>
        <taxon>Bacteria</taxon>
        <taxon>Pseudomonadati</taxon>
        <taxon>Pseudomonadota</taxon>
        <taxon>Gammaproteobacteria</taxon>
        <taxon>Enterobacterales</taxon>
        <taxon>Enterobacteriaceae</taxon>
        <taxon>Escherichia</taxon>
    </lineage>
</organism>
<protein>
    <recommendedName>
        <fullName evidence="1">UPF0387 membrane protein YohO</fullName>
    </recommendedName>
</protein>
<reference key="1">
    <citation type="journal article" date="2006" name="Proc. Natl. Acad. Sci. U.S.A.">
        <title>Identification of genes subject to positive selection in uropathogenic strains of Escherichia coli: a comparative genomics approach.</title>
        <authorList>
            <person name="Chen S.L."/>
            <person name="Hung C.-S."/>
            <person name="Xu J."/>
            <person name="Reigstad C.S."/>
            <person name="Magrini V."/>
            <person name="Sabo A."/>
            <person name="Blasiar D."/>
            <person name="Bieri T."/>
            <person name="Meyer R.R."/>
            <person name="Ozersky P."/>
            <person name="Armstrong J.R."/>
            <person name="Fulton R.S."/>
            <person name="Latreille J.P."/>
            <person name="Spieth J."/>
            <person name="Hooton T.M."/>
            <person name="Mardis E.R."/>
            <person name="Hultgren S.J."/>
            <person name="Gordon J.I."/>
        </authorList>
    </citation>
    <scope>NUCLEOTIDE SEQUENCE [LARGE SCALE GENOMIC DNA]</scope>
    <source>
        <strain>UTI89 / UPEC</strain>
    </source>
</reference>
<dbReference type="EMBL" id="CP000243">
    <property type="protein sequence ID" value="ABE07868.1"/>
    <property type="molecule type" value="Genomic_DNA"/>
</dbReference>
<dbReference type="RefSeq" id="WP_001216963.1">
    <property type="nucleotide sequence ID" value="NZ_CP064825.1"/>
</dbReference>
<dbReference type="KEGG" id="eci:UTI89_C2400"/>
<dbReference type="HOGENOM" id="CLU_220259_0_0_6"/>
<dbReference type="Proteomes" id="UP000001952">
    <property type="component" value="Chromosome"/>
</dbReference>
<dbReference type="GO" id="GO:0005886">
    <property type="term" value="C:plasma membrane"/>
    <property type="evidence" value="ECO:0007669"/>
    <property type="project" value="UniProtKB-SubCell"/>
</dbReference>
<dbReference type="HAMAP" id="MF_01362">
    <property type="entry name" value="UPF0387"/>
    <property type="match status" value="1"/>
</dbReference>
<dbReference type="InterPro" id="IPR020870">
    <property type="entry name" value="UPF0387_membrane"/>
</dbReference>
<dbReference type="NCBIfam" id="NF010225">
    <property type="entry name" value="PRK13681.1"/>
    <property type="match status" value="1"/>
</dbReference>
<accession>Q1R9U6</accession>
<proteinExistence type="inferred from homology"/>
<gene>
    <name evidence="1" type="primary">yohO</name>
    <name type="ordered locus">UTI89_C2400</name>
</gene>
<name>YOHO_ECOUT</name>
<feature type="chain" id="PRO_0000252196" description="UPF0387 membrane protein YohO">
    <location>
        <begin position="1"/>
        <end position="35"/>
    </location>
</feature>
<feature type="transmembrane region" description="Helical" evidence="1">
    <location>
        <begin position="6"/>
        <end position="26"/>
    </location>
</feature>
<comment type="subcellular location">
    <subcellularLocation>
        <location evidence="1">Cell inner membrane</location>
        <topology evidence="1">Single-pass membrane protein</topology>
    </subcellularLocation>
</comment>
<comment type="similarity">
    <text evidence="1">Belongs to the UPF0387 family.</text>
</comment>